<comment type="function">
    <text evidence="2">GTP hydrolase that promotes the GTP-dependent binding of aminoacyl-tRNA to the A-site of ribosomes during protein biosynthesis.</text>
</comment>
<comment type="catalytic activity">
    <reaction evidence="2">
        <text>GTP + H2O = GDP + phosphate + H(+)</text>
        <dbReference type="Rhea" id="RHEA:19669"/>
        <dbReference type="ChEBI" id="CHEBI:15377"/>
        <dbReference type="ChEBI" id="CHEBI:15378"/>
        <dbReference type="ChEBI" id="CHEBI:37565"/>
        <dbReference type="ChEBI" id="CHEBI:43474"/>
        <dbReference type="ChEBI" id="CHEBI:58189"/>
        <dbReference type="EC" id="3.6.5.3"/>
    </reaction>
    <physiologicalReaction direction="left-to-right" evidence="2">
        <dbReference type="Rhea" id="RHEA:19670"/>
    </physiologicalReaction>
</comment>
<comment type="subunit">
    <text evidence="2">Monomer.</text>
</comment>
<comment type="subcellular location">
    <subcellularLocation>
        <location evidence="2">Cytoplasm</location>
    </subcellularLocation>
</comment>
<comment type="similarity">
    <text evidence="2">Belongs to the TRAFAC class translation factor GTPase superfamily. Classic translation factor GTPase family. EF-Tu/EF-1A subfamily.</text>
</comment>
<gene>
    <name evidence="2" type="primary">tuf</name>
    <name type="ordered locus">BRADO3064</name>
</gene>
<protein>
    <recommendedName>
        <fullName evidence="2">Elongation factor Tu</fullName>
        <shortName evidence="2">EF-Tu</shortName>
        <ecNumber evidence="2">3.6.5.3</ecNumber>
    </recommendedName>
</protein>
<dbReference type="EC" id="3.6.5.3" evidence="2"/>
<dbReference type="EMBL" id="CU234118">
    <property type="protein sequence ID" value="CAL76866.1"/>
    <property type="molecule type" value="Genomic_DNA"/>
</dbReference>
<dbReference type="RefSeq" id="WP_008963462.1">
    <property type="nucleotide sequence ID" value="NC_009445.1"/>
</dbReference>
<dbReference type="SMR" id="A4YSJ0"/>
<dbReference type="STRING" id="114615.BRADO3064"/>
<dbReference type="KEGG" id="bra:BRADO3064"/>
<dbReference type="eggNOG" id="COG0050">
    <property type="taxonomic scope" value="Bacteria"/>
</dbReference>
<dbReference type="HOGENOM" id="CLU_007265_0_0_5"/>
<dbReference type="OrthoDB" id="9803139at2"/>
<dbReference type="Proteomes" id="UP000001994">
    <property type="component" value="Chromosome"/>
</dbReference>
<dbReference type="GO" id="GO:0005829">
    <property type="term" value="C:cytosol"/>
    <property type="evidence" value="ECO:0007669"/>
    <property type="project" value="TreeGrafter"/>
</dbReference>
<dbReference type="GO" id="GO:0005525">
    <property type="term" value="F:GTP binding"/>
    <property type="evidence" value="ECO:0007669"/>
    <property type="project" value="UniProtKB-UniRule"/>
</dbReference>
<dbReference type="GO" id="GO:0003924">
    <property type="term" value="F:GTPase activity"/>
    <property type="evidence" value="ECO:0007669"/>
    <property type="project" value="InterPro"/>
</dbReference>
<dbReference type="GO" id="GO:0097216">
    <property type="term" value="F:guanosine tetraphosphate binding"/>
    <property type="evidence" value="ECO:0007669"/>
    <property type="project" value="UniProtKB-ARBA"/>
</dbReference>
<dbReference type="GO" id="GO:0003746">
    <property type="term" value="F:translation elongation factor activity"/>
    <property type="evidence" value="ECO:0007669"/>
    <property type="project" value="UniProtKB-UniRule"/>
</dbReference>
<dbReference type="CDD" id="cd01884">
    <property type="entry name" value="EF_Tu"/>
    <property type="match status" value="1"/>
</dbReference>
<dbReference type="CDD" id="cd03697">
    <property type="entry name" value="EFTU_II"/>
    <property type="match status" value="1"/>
</dbReference>
<dbReference type="CDD" id="cd03707">
    <property type="entry name" value="EFTU_III"/>
    <property type="match status" value="1"/>
</dbReference>
<dbReference type="FunFam" id="2.40.30.10:FF:000001">
    <property type="entry name" value="Elongation factor Tu"/>
    <property type="match status" value="1"/>
</dbReference>
<dbReference type="FunFam" id="3.40.50.300:FF:000003">
    <property type="entry name" value="Elongation factor Tu"/>
    <property type="match status" value="1"/>
</dbReference>
<dbReference type="Gene3D" id="3.40.50.300">
    <property type="entry name" value="P-loop containing nucleotide triphosphate hydrolases"/>
    <property type="match status" value="1"/>
</dbReference>
<dbReference type="Gene3D" id="2.40.30.10">
    <property type="entry name" value="Translation factors"/>
    <property type="match status" value="2"/>
</dbReference>
<dbReference type="HAMAP" id="MF_00118_B">
    <property type="entry name" value="EF_Tu_B"/>
    <property type="match status" value="1"/>
</dbReference>
<dbReference type="InterPro" id="IPR041709">
    <property type="entry name" value="EF-Tu_GTP-bd"/>
</dbReference>
<dbReference type="InterPro" id="IPR050055">
    <property type="entry name" value="EF-Tu_GTPase"/>
</dbReference>
<dbReference type="InterPro" id="IPR004161">
    <property type="entry name" value="EFTu-like_2"/>
</dbReference>
<dbReference type="InterPro" id="IPR033720">
    <property type="entry name" value="EFTU_2"/>
</dbReference>
<dbReference type="InterPro" id="IPR031157">
    <property type="entry name" value="G_TR_CS"/>
</dbReference>
<dbReference type="InterPro" id="IPR027417">
    <property type="entry name" value="P-loop_NTPase"/>
</dbReference>
<dbReference type="InterPro" id="IPR005225">
    <property type="entry name" value="Small_GTP-bd"/>
</dbReference>
<dbReference type="InterPro" id="IPR000795">
    <property type="entry name" value="T_Tr_GTP-bd_dom"/>
</dbReference>
<dbReference type="InterPro" id="IPR009000">
    <property type="entry name" value="Transl_B-barrel_sf"/>
</dbReference>
<dbReference type="InterPro" id="IPR009001">
    <property type="entry name" value="Transl_elong_EF1A/Init_IF2_C"/>
</dbReference>
<dbReference type="InterPro" id="IPR004541">
    <property type="entry name" value="Transl_elong_EFTu/EF1A_bac/org"/>
</dbReference>
<dbReference type="InterPro" id="IPR004160">
    <property type="entry name" value="Transl_elong_EFTu/EF1A_C"/>
</dbReference>
<dbReference type="NCBIfam" id="TIGR00485">
    <property type="entry name" value="EF-Tu"/>
    <property type="match status" value="1"/>
</dbReference>
<dbReference type="NCBIfam" id="NF000766">
    <property type="entry name" value="PRK00049.1"/>
    <property type="match status" value="1"/>
</dbReference>
<dbReference type="NCBIfam" id="NF009372">
    <property type="entry name" value="PRK12735.1"/>
    <property type="match status" value="1"/>
</dbReference>
<dbReference type="NCBIfam" id="NF009373">
    <property type="entry name" value="PRK12736.1"/>
    <property type="match status" value="1"/>
</dbReference>
<dbReference type="NCBIfam" id="TIGR00231">
    <property type="entry name" value="small_GTP"/>
    <property type="match status" value="1"/>
</dbReference>
<dbReference type="PANTHER" id="PTHR43721:SF22">
    <property type="entry name" value="ELONGATION FACTOR TU, MITOCHONDRIAL"/>
    <property type="match status" value="1"/>
</dbReference>
<dbReference type="PANTHER" id="PTHR43721">
    <property type="entry name" value="ELONGATION FACTOR TU-RELATED"/>
    <property type="match status" value="1"/>
</dbReference>
<dbReference type="Pfam" id="PF00009">
    <property type="entry name" value="GTP_EFTU"/>
    <property type="match status" value="1"/>
</dbReference>
<dbReference type="Pfam" id="PF03144">
    <property type="entry name" value="GTP_EFTU_D2"/>
    <property type="match status" value="1"/>
</dbReference>
<dbReference type="Pfam" id="PF03143">
    <property type="entry name" value="GTP_EFTU_D3"/>
    <property type="match status" value="1"/>
</dbReference>
<dbReference type="PRINTS" id="PR00315">
    <property type="entry name" value="ELONGATNFCT"/>
</dbReference>
<dbReference type="SUPFAM" id="SSF50465">
    <property type="entry name" value="EF-Tu/eEF-1alpha/eIF2-gamma C-terminal domain"/>
    <property type="match status" value="1"/>
</dbReference>
<dbReference type="SUPFAM" id="SSF52540">
    <property type="entry name" value="P-loop containing nucleoside triphosphate hydrolases"/>
    <property type="match status" value="1"/>
</dbReference>
<dbReference type="SUPFAM" id="SSF50447">
    <property type="entry name" value="Translation proteins"/>
    <property type="match status" value="1"/>
</dbReference>
<dbReference type="PROSITE" id="PS00301">
    <property type="entry name" value="G_TR_1"/>
    <property type="match status" value="1"/>
</dbReference>
<dbReference type="PROSITE" id="PS51722">
    <property type="entry name" value="G_TR_2"/>
    <property type="match status" value="1"/>
</dbReference>
<feature type="chain" id="PRO_1000015623" description="Elongation factor Tu">
    <location>
        <begin position="1"/>
        <end position="396"/>
    </location>
</feature>
<feature type="domain" description="tr-type G">
    <location>
        <begin position="10"/>
        <end position="206"/>
    </location>
</feature>
<feature type="region of interest" description="G1" evidence="1">
    <location>
        <begin position="19"/>
        <end position="26"/>
    </location>
</feature>
<feature type="region of interest" description="G2" evidence="1">
    <location>
        <begin position="60"/>
        <end position="64"/>
    </location>
</feature>
<feature type="region of interest" description="G3" evidence="1">
    <location>
        <begin position="81"/>
        <end position="84"/>
    </location>
</feature>
<feature type="region of interest" description="G4" evidence="1">
    <location>
        <begin position="136"/>
        <end position="139"/>
    </location>
</feature>
<feature type="region of interest" description="G5" evidence="1">
    <location>
        <begin position="174"/>
        <end position="176"/>
    </location>
</feature>
<feature type="binding site" evidence="2">
    <location>
        <begin position="19"/>
        <end position="26"/>
    </location>
    <ligand>
        <name>GTP</name>
        <dbReference type="ChEBI" id="CHEBI:37565"/>
    </ligand>
</feature>
<feature type="binding site" evidence="2">
    <location>
        <position position="26"/>
    </location>
    <ligand>
        <name>Mg(2+)</name>
        <dbReference type="ChEBI" id="CHEBI:18420"/>
    </ligand>
</feature>
<feature type="binding site" evidence="2">
    <location>
        <begin position="81"/>
        <end position="85"/>
    </location>
    <ligand>
        <name>GTP</name>
        <dbReference type="ChEBI" id="CHEBI:37565"/>
    </ligand>
</feature>
<feature type="binding site" evidence="2">
    <location>
        <begin position="136"/>
        <end position="139"/>
    </location>
    <ligand>
        <name>GTP</name>
        <dbReference type="ChEBI" id="CHEBI:37565"/>
    </ligand>
</feature>
<proteinExistence type="inferred from homology"/>
<keyword id="KW-0963">Cytoplasm</keyword>
<keyword id="KW-0251">Elongation factor</keyword>
<keyword id="KW-0342">GTP-binding</keyword>
<keyword id="KW-0378">Hydrolase</keyword>
<keyword id="KW-0460">Magnesium</keyword>
<keyword id="KW-0479">Metal-binding</keyword>
<keyword id="KW-0547">Nucleotide-binding</keyword>
<keyword id="KW-0648">Protein biosynthesis</keyword>
<keyword id="KW-1185">Reference proteome</keyword>
<organism>
    <name type="scientific">Bradyrhizobium sp. (strain ORS 278)</name>
    <dbReference type="NCBI Taxonomy" id="114615"/>
    <lineage>
        <taxon>Bacteria</taxon>
        <taxon>Pseudomonadati</taxon>
        <taxon>Pseudomonadota</taxon>
        <taxon>Alphaproteobacteria</taxon>
        <taxon>Hyphomicrobiales</taxon>
        <taxon>Nitrobacteraceae</taxon>
        <taxon>Bradyrhizobium</taxon>
    </lineage>
</organism>
<evidence type="ECO:0000250" key="1"/>
<evidence type="ECO:0000255" key="2">
    <source>
        <dbReference type="HAMAP-Rule" id="MF_00118"/>
    </source>
</evidence>
<sequence>MAKAKFERNKPHCNIGTIGHVDHGKTSLTAAITKILAETGGATFTAYDQIDKAPEEKARGITISTAHVEYETQNRHYAHVDCPGHADYVKNMITGAAQMDGAILVVSAADGPMPQTREHILLARQVGVPALVVFLNKCDMVDDPELLELVELEVRELLSKYEFPGDKIPIIKGSALAALEDSDKKLGHDAILELMRNVDEYIPQPERPIDQPFLMPVEDVFSISGRGTVVTGRVERGVIKVGEEIEIVGIRPTQKTTVTGVEMFRKLLDQGQAGDNIGALLRGTKREDVERGQVLCKPGSVKPHTKFKAEAYILTKEEGGRHTPFFTNYRPQFYFRTTDVTGVVHLPEGTEMVMPGDNIAMEVHLIVPIAMEEKLRFAIREGGRTVGAGVVASIIE</sequence>
<reference key="1">
    <citation type="journal article" date="2007" name="Science">
        <title>Legumes symbioses: absence of nod genes in photosynthetic bradyrhizobia.</title>
        <authorList>
            <person name="Giraud E."/>
            <person name="Moulin L."/>
            <person name="Vallenet D."/>
            <person name="Barbe V."/>
            <person name="Cytryn E."/>
            <person name="Avarre J.-C."/>
            <person name="Jaubert M."/>
            <person name="Simon D."/>
            <person name="Cartieaux F."/>
            <person name="Prin Y."/>
            <person name="Bena G."/>
            <person name="Hannibal L."/>
            <person name="Fardoux J."/>
            <person name="Kojadinovic M."/>
            <person name="Vuillet L."/>
            <person name="Lajus A."/>
            <person name="Cruveiller S."/>
            <person name="Rouy Z."/>
            <person name="Mangenot S."/>
            <person name="Segurens B."/>
            <person name="Dossat C."/>
            <person name="Franck W.L."/>
            <person name="Chang W.-S."/>
            <person name="Saunders E."/>
            <person name="Bruce D."/>
            <person name="Richardson P."/>
            <person name="Normand P."/>
            <person name="Dreyfus B."/>
            <person name="Pignol D."/>
            <person name="Stacey G."/>
            <person name="Emerich D."/>
            <person name="Vermeglio A."/>
            <person name="Medigue C."/>
            <person name="Sadowsky M."/>
        </authorList>
    </citation>
    <scope>NUCLEOTIDE SEQUENCE [LARGE SCALE GENOMIC DNA]</scope>
    <source>
        <strain>ORS 278</strain>
    </source>
</reference>
<name>EFTU_BRASO</name>
<accession>A4YSJ0</accession>